<name>CEGT_XENTR</name>
<gene>
    <name type="primary">ugcg</name>
    <name type="ORF">TEgg030g03.1</name>
</gene>
<feature type="chain" id="PRO_0000376856" description="Ceramide glucosyltransferase">
    <location>
        <begin position="1"/>
        <end position="394"/>
    </location>
</feature>
<feature type="topological domain" description="Lumenal" evidence="4">
    <location>
        <begin position="1"/>
        <end position="10"/>
    </location>
</feature>
<feature type="transmembrane region" description="Helical" evidence="4">
    <location>
        <begin position="11"/>
        <end position="32"/>
    </location>
</feature>
<feature type="topological domain" description="Cytoplasmic" evidence="4">
    <location>
        <begin position="33"/>
        <end position="195"/>
    </location>
</feature>
<feature type="transmembrane region" description="Helical" evidence="4">
    <location>
        <begin position="196"/>
        <end position="215"/>
    </location>
</feature>
<feature type="topological domain" description="Lumenal" evidence="4">
    <location>
        <begin position="216"/>
        <end position="287"/>
    </location>
</feature>
<feature type="transmembrane region" description="Helical" evidence="4">
    <location>
        <begin position="288"/>
        <end position="304"/>
    </location>
</feature>
<feature type="topological domain" description="Cytoplasmic" evidence="4">
    <location>
        <begin position="305"/>
        <end position="309"/>
    </location>
</feature>
<feature type="transmembrane region" description="Helical" evidence="4">
    <location>
        <begin position="310"/>
        <end position="328"/>
    </location>
</feature>
<feature type="topological domain" description="Lumenal" evidence="4">
    <location>
        <begin position="329"/>
        <end position="348"/>
    </location>
</feature>
<feature type="transmembrane region" description="Helical" evidence="4">
    <location>
        <begin position="349"/>
        <end position="369"/>
    </location>
</feature>
<feature type="topological domain" description="Cytoplasmic" evidence="4">
    <location>
        <begin position="370"/>
        <end position="394"/>
    </location>
</feature>
<feature type="short sequence motif" description="D1" evidence="5">
    <location>
        <position position="92"/>
    </location>
</feature>
<feature type="short sequence motif" description="D2" evidence="5">
    <location>
        <position position="144"/>
    </location>
</feature>
<feature type="short sequence motif" description="D3" evidence="5">
    <location>
        <position position="236"/>
    </location>
</feature>
<feature type="short sequence motif" description="(Q/R)XXRW" evidence="5">
    <location>
        <begin position="272"/>
        <end position="276"/>
    </location>
</feature>
<feature type="active site" description="Proton acceptor" evidence="3">
    <location>
        <position position="236"/>
    </location>
</feature>
<protein>
    <recommendedName>
        <fullName evidence="1">Ceramide glucosyltransferase</fullName>
        <ecNumber evidence="2">2.4.1.80</ecNumber>
    </recommendedName>
    <alternativeName>
        <fullName>Glycosylceramide synthase</fullName>
    </alternativeName>
    <alternativeName>
        <fullName evidence="6">UDP-glucose ceramide glucosyltransferase</fullName>
    </alternativeName>
</protein>
<evidence type="ECO:0000250" key="1">
    <source>
        <dbReference type="UniProtKB" id="Q16739"/>
    </source>
</evidence>
<evidence type="ECO:0000250" key="2">
    <source>
        <dbReference type="UniProtKB" id="Q8AY29"/>
    </source>
</evidence>
<evidence type="ECO:0000250" key="3">
    <source>
        <dbReference type="UniProtKB" id="Q9R0E0"/>
    </source>
</evidence>
<evidence type="ECO:0000255" key="4"/>
<evidence type="ECO:0000305" key="5"/>
<evidence type="ECO:0000312" key="6">
    <source>
        <dbReference type="EMBL" id="AAH90614.1"/>
    </source>
</evidence>
<evidence type="ECO:0000312" key="7">
    <source>
        <dbReference type="EMBL" id="CAJ81500.1"/>
    </source>
</evidence>
<proteinExistence type="evidence at transcript level"/>
<comment type="function">
    <text evidence="1 2">Participates in the initial step of the glucosylceramide-based glycosphingolipid/GSL synthetic pathway at the cytosolic surface of the Golgi. Catalyzes the transfer of glucose from UDP-glucose to ceramide to produce glucosylceramide/GlcCer (such as beta-D-glucosyl-(1&lt;-&gt;1')-N-acylsphing-4-enine). Glucosylceramide is the core component of glycosphingolipids/GSLs, amphipathic molecules consisting of a ceramide lipid moiety embedded in the outer leaflet of the membrane, linked to one of hundreds of different externally oriented oligosaccharide structures. Glycosphingolipids are essential components of membrane microdomains that mediate membrane trafficking and signal transduction. They are implicated in many fundamental cellular processes, including growth, differentiation, migration, morphogenesis, cell-to-cell and cell-to-matrix interactions (By similarity). Catalyzes the synthesis of xylosylceramide/XylCer (such as beta-D-xylosyl-(1&lt;-&gt;1')-N-acylsphing-4-enine) using UDP-Xyl as xylose donor (By similarity).</text>
</comment>
<comment type="catalytic activity">
    <reaction evidence="2">
        <text>an N-acylsphing-4-enine + UDP-alpha-D-glucose = a beta-D-glucosyl-(1&lt;-&gt;1')-N-acylsphing-4-enine + UDP + H(+)</text>
        <dbReference type="Rhea" id="RHEA:12088"/>
        <dbReference type="ChEBI" id="CHEBI:15378"/>
        <dbReference type="ChEBI" id="CHEBI:22801"/>
        <dbReference type="ChEBI" id="CHEBI:52639"/>
        <dbReference type="ChEBI" id="CHEBI:58223"/>
        <dbReference type="ChEBI" id="CHEBI:58885"/>
        <dbReference type="EC" id="2.4.1.80"/>
    </reaction>
</comment>
<comment type="catalytic activity">
    <reaction evidence="1">
        <text>UDP-alpha-D-xylose + an N-acylsphing-4-enine = a beta-D-xylosyl-(1&lt;-&gt;1')-N-acylsphing-4-enine + UDP + H(+)</text>
        <dbReference type="Rhea" id="RHEA:70243"/>
        <dbReference type="ChEBI" id="CHEBI:15378"/>
        <dbReference type="ChEBI" id="CHEBI:52639"/>
        <dbReference type="ChEBI" id="CHEBI:57632"/>
        <dbReference type="ChEBI" id="CHEBI:58223"/>
        <dbReference type="ChEBI" id="CHEBI:189068"/>
    </reaction>
    <physiologicalReaction direction="left-to-right" evidence="1">
        <dbReference type="Rhea" id="RHEA:70244"/>
    </physiologicalReaction>
</comment>
<comment type="catalytic activity">
    <reaction evidence="1">
        <text>N-(9Z-octadecenoyl)-sphing-4-enine + UDP-alpha-D-xylose = beta-D-xylosyl-(1&lt;-&gt;1')-N-(9Z-octadecenoyl)-sphing-4-enine + UDP + H(+)</text>
        <dbReference type="Rhea" id="RHEA:70247"/>
        <dbReference type="ChEBI" id="CHEBI:15378"/>
        <dbReference type="ChEBI" id="CHEBI:57632"/>
        <dbReference type="ChEBI" id="CHEBI:58223"/>
        <dbReference type="ChEBI" id="CHEBI:77996"/>
        <dbReference type="ChEBI" id="CHEBI:189081"/>
    </reaction>
    <physiologicalReaction direction="left-to-right" evidence="1">
        <dbReference type="Rhea" id="RHEA:70248"/>
    </physiologicalReaction>
</comment>
<comment type="pathway">
    <text evidence="2">Lipid metabolism; sphingolipid metabolism.</text>
</comment>
<comment type="subcellular location">
    <subcellularLocation>
        <location evidence="2 4">Golgi apparatus membrane</location>
        <topology evidence="2 4">Multi-pass membrane protein</topology>
    </subcellularLocation>
</comment>
<comment type="domain">
    <text evidence="3">The D1, D2, D3, (Q/R)XXRW motif is a critical part of the GCS active site, involved in catalysis and UDP-sugar binding.</text>
</comment>
<comment type="similarity">
    <text evidence="4">Belongs to the glycosyltransferase 2 family.</text>
</comment>
<organism>
    <name type="scientific">Xenopus tropicalis</name>
    <name type="common">Western clawed frog</name>
    <name type="synonym">Silurana tropicalis</name>
    <dbReference type="NCBI Taxonomy" id="8364"/>
    <lineage>
        <taxon>Eukaryota</taxon>
        <taxon>Metazoa</taxon>
        <taxon>Chordata</taxon>
        <taxon>Craniata</taxon>
        <taxon>Vertebrata</taxon>
        <taxon>Euteleostomi</taxon>
        <taxon>Amphibia</taxon>
        <taxon>Batrachia</taxon>
        <taxon>Anura</taxon>
        <taxon>Pipoidea</taxon>
        <taxon>Pipidae</taxon>
        <taxon>Xenopodinae</taxon>
        <taxon>Xenopus</taxon>
        <taxon>Silurana</taxon>
    </lineage>
</organism>
<dbReference type="EC" id="2.4.1.80" evidence="2"/>
<dbReference type="EMBL" id="CR762041">
    <property type="protein sequence ID" value="CAJ81500.1"/>
    <property type="molecule type" value="mRNA"/>
</dbReference>
<dbReference type="EMBL" id="BC090614">
    <property type="protein sequence ID" value="AAH90614.1"/>
    <property type="molecule type" value="mRNA"/>
</dbReference>
<dbReference type="RefSeq" id="NP_001016133.1">
    <property type="nucleotide sequence ID" value="NM_001016133.2"/>
</dbReference>
<dbReference type="SMR" id="Q5BL38"/>
<dbReference type="FunCoup" id="Q5BL38">
    <property type="interactions" value="650"/>
</dbReference>
<dbReference type="STRING" id="8364.ENSXETP00000020393"/>
<dbReference type="CAZy" id="GT21">
    <property type="family name" value="Glycosyltransferase Family 21"/>
</dbReference>
<dbReference type="PaxDb" id="8364-ENSXETP00000005911"/>
<dbReference type="DNASU" id="548887"/>
<dbReference type="GeneID" id="548887"/>
<dbReference type="KEGG" id="xtr:548887"/>
<dbReference type="AGR" id="Xenbase:XB-GENE-944694"/>
<dbReference type="CTD" id="7357"/>
<dbReference type="Xenbase" id="XB-GENE-944694">
    <property type="gene designation" value="ugcg"/>
</dbReference>
<dbReference type="eggNOG" id="KOG2547">
    <property type="taxonomic scope" value="Eukaryota"/>
</dbReference>
<dbReference type="HOGENOM" id="CLU_030898_0_0_1"/>
<dbReference type="InParanoid" id="Q5BL38"/>
<dbReference type="OMA" id="IVWIIDC"/>
<dbReference type="OrthoDB" id="1483400at2759"/>
<dbReference type="PhylomeDB" id="Q5BL38"/>
<dbReference type="TreeFam" id="TF314564"/>
<dbReference type="Reactome" id="R-XTR-9840309">
    <property type="pathway name" value="Glycosphingolipid biosynthesis"/>
</dbReference>
<dbReference type="UniPathway" id="UPA00222"/>
<dbReference type="Proteomes" id="UP000008143">
    <property type="component" value="Chromosome 1"/>
</dbReference>
<dbReference type="Bgee" id="ENSXETG00000010219">
    <property type="expression patterns" value="Expressed in neurula embryo and 20 other cell types or tissues"/>
</dbReference>
<dbReference type="GO" id="GO:0005794">
    <property type="term" value="C:Golgi apparatus"/>
    <property type="evidence" value="ECO:0000250"/>
    <property type="project" value="UniProtKB"/>
</dbReference>
<dbReference type="GO" id="GO:0000139">
    <property type="term" value="C:Golgi membrane"/>
    <property type="evidence" value="ECO:0007669"/>
    <property type="project" value="UniProtKB-SubCell"/>
</dbReference>
<dbReference type="GO" id="GO:0008120">
    <property type="term" value="F:ceramide glucosyltransferase activity"/>
    <property type="evidence" value="ECO:0000250"/>
    <property type="project" value="UniProtKB"/>
</dbReference>
<dbReference type="GO" id="GO:0046479">
    <property type="term" value="P:glycosphingolipid catabolic process"/>
    <property type="evidence" value="ECO:0000250"/>
    <property type="project" value="UniProtKB"/>
</dbReference>
<dbReference type="CDD" id="cd02520">
    <property type="entry name" value="Glucosylceramide_synthase"/>
    <property type="match status" value="1"/>
</dbReference>
<dbReference type="FunFam" id="3.90.550.10:FF:000041">
    <property type="entry name" value="UDP-glucose ceramide glucosyltransferase"/>
    <property type="match status" value="1"/>
</dbReference>
<dbReference type="Gene3D" id="3.90.550.10">
    <property type="entry name" value="Spore Coat Polysaccharide Biosynthesis Protein SpsA, Chain A"/>
    <property type="match status" value="1"/>
</dbReference>
<dbReference type="InterPro" id="IPR025993">
    <property type="entry name" value="Ceramide_glucosylTrfase"/>
</dbReference>
<dbReference type="InterPro" id="IPR029044">
    <property type="entry name" value="Nucleotide-diphossugar_trans"/>
</dbReference>
<dbReference type="PANTHER" id="PTHR12726">
    <property type="entry name" value="CERAMIDE GLUCOSYLTRANSFERASE"/>
    <property type="match status" value="1"/>
</dbReference>
<dbReference type="PANTHER" id="PTHR12726:SF0">
    <property type="entry name" value="CERAMIDE GLUCOSYLTRANSFERASE"/>
    <property type="match status" value="1"/>
</dbReference>
<dbReference type="Pfam" id="PF13506">
    <property type="entry name" value="Glyco_transf_21"/>
    <property type="match status" value="1"/>
</dbReference>
<dbReference type="SUPFAM" id="SSF53448">
    <property type="entry name" value="Nucleotide-diphospho-sugar transferases"/>
    <property type="match status" value="1"/>
</dbReference>
<sequence>MAVLDLALQGLAIFGCVLFFVLWFMHFLSIVYTRLHLNKKVSDKQPYSKLPGVSLLKPLKGVDPNLINNLETFFELDYPKFEILLCVQDLDDPAVDVCKKLLGKYPSVDAKLFIGGKKVGINPKINNLMPGYEVAKYDLIWICDSGIKVKPDTLTDMANQMTEKVGLVHGLPYVADRQGFAATLEQVYFGTSHPRSYISANVTGFKCVTGMSCLMRKEVLDQAGGLIAFAQYIAEDYFMAKAIADRGWKFSMATQVAMQNSGCYSISQFQSRMIRWAKLRINMLPATIICEPISECFVASLIIGWAAHHIFRWDIMVFFMCHCLAWFIFDYIQLRGVQGGPLNFSKLDYAVAWFIRESMTIYIFLSALWDPTISWRTGRYRLRCGGTAEEILDV</sequence>
<reference evidence="7" key="1">
    <citation type="submission" date="2006-10" db="EMBL/GenBank/DDBJ databases">
        <authorList>
            <consortium name="Sanger Xenopus tropicalis EST/cDNA project"/>
        </authorList>
    </citation>
    <scope>NUCLEOTIDE SEQUENCE [LARGE SCALE MRNA]</scope>
    <source>
        <tissue evidence="7">Egg</tissue>
    </source>
</reference>
<reference evidence="7" key="2">
    <citation type="submission" date="2005-02" db="EMBL/GenBank/DDBJ databases">
        <authorList>
            <consortium name="NIH - Xenopus Gene Collection (XGC) project"/>
        </authorList>
    </citation>
    <scope>NUCLEOTIDE SEQUENCE [LARGE SCALE MRNA]</scope>
    <source>
        <tissue evidence="6">Tail bud</tissue>
    </source>
</reference>
<keyword id="KW-0217">Developmental protein</keyword>
<keyword id="KW-0328">Glycosyltransferase</keyword>
<keyword id="KW-0333">Golgi apparatus</keyword>
<keyword id="KW-0444">Lipid biosynthesis</keyword>
<keyword id="KW-0443">Lipid metabolism</keyword>
<keyword id="KW-0472">Membrane</keyword>
<keyword id="KW-1185">Reference proteome</keyword>
<keyword id="KW-0746">Sphingolipid metabolism</keyword>
<keyword id="KW-0808">Transferase</keyword>
<keyword id="KW-0812">Transmembrane</keyword>
<keyword id="KW-1133">Transmembrane helix</keyword>
<accession>Q5BL38</accession>